<accession>P29167</accession>
<keyword id="KW-0167">Capsid protein</keyword>
<keyword id="KW-0175">Coiled coil</keyword>
<keyword id="KW-1032">Host cell membrane</keyword>
<keyword id="KW-1035">Host cytoplasm</keyword>
<keyword id="KW-1039">Host endosome</keyword>
<keyword id="KW-1043">Host membrane</keyword>
<keyword id="KW-0945">Host-virus interaction</keyword>
<keyword id="KW-0449">Lipoprotein</keyword>
<keyword id="KW-0472">Membrane</keyword>
<keyword id="KW-0479">Metal-binding</keyword>
<keyword id="KW-0519">Myristate</keyword>
<keyword id="KW-0597">Phosphoprotein</keyword>
<keyword id="KW-0694">RNA-binding</keyword>
<keyword id="KW-0832">Ubl conjugation</keyword>
<keyword id="KW-1198">Viral budding</keyword>
<keyword id="KW-1187">Viral budding via the host ESCRT complexes</keyword>
<keyword id="KW-0468">Viral matrix protein</keyword>
<keyword id="KW-0543">Viral nucleoprotein</keyword>
<keyword id="KW-1188">Viral release from host cell</keyword>
<keyword id="KW-0946">Virion</keyword>
<keyword id="KW-0862">Zinc</keyword>
<keyword id="KW-0863">Zinc-finger</keyword>
<organism>
    <name type="scientific">Murine leukemia virus (strain BM5 eco)</name>
    <dbReference type="NCBI Taxonomy" id="31687"/>
    <lineage>
        <taxon>Viruses</taxon>
        <taxon>Riboviria</taxon>
        <taxon>Pararnavirae</taxon>
        <taxon>Artverviricota</taxon>
        <taxon>Revtraviricetes</taxon>
        <taxon>Ortervirales</taxon>
        <taxon>Retroviridae</taxon>
        <taxon>Orthoretrovirinae</taxon>
        <taxon>Gammaretrovirus</taxon>
        <taxon>Murine leukemia virus</taxon>
    </lineage>
</organism>
<proteinExistence type="inferred from homology"/>
<protein>
    <recommendedName>
        <fullName>Gag polyprotein</fullName>
    </recommendedName>
    <alternativeName>
        <fullName>Core polyprotein</fullName>
    </alternativeName>
    <component>
        <recommendedName>
            <fullName>Matrix protein p15</fullName>
            <shortName>MA</shortName>
        </recommendedName>
    </component>
    <component>
        <recommendedName>
            <fullName>RNA-binding phosphoprotein p12</fullName>
        </recommendedName>
        <alternativeName>
            <fullName>pp12</fullName>
        </alternativeName>
    </component>
    <component>
        <recommendedName>
            <fullName>Capsid protein p30</fullName>
            <shortName>CA</shortName>
        </recommendedName>
    </component>
    <component>
        <recommendedName>
            <fullName>Nucleocapsid protein p10-Gag</fullName>
            <shortName>NC-gag</shortName>
        </recommendedName>
    </component>
</protein>
<dbReference type="EMBL" id="M64095">
    <property type="protein sequence ID" value="AAA46510.1"/>
    <property type="molecule type" value="Genomic_DNA"/>
</dbReference>
<dbReference type="PIR" id="A40416">
    <property type="entry name" value="FOMVMB"/>
</dbReference>
<dbReference type="SMR" id="P29167"/>
<dbReference type="GO" id="GO:0020002">
    <property type="term" value="C:host cell plasma membrane"/>
    <property type="evidence" value="ECO:0007669"/>
    <property type="project" value="UniProtKB-SubCell"/>
</dbReference>
<dbReference type="GO" id="GO:0072494">
    <property type="term" value="C:host multivesicular body"/>
    <property type="evidence" value="ECO:0007669"/>
    <property type="project" value="UniProtKB-SubCell"/>
</dbReference>
<dbReference type="GO" id="GO:0016020">
    <property type="term" value="C:membrane"/>
    <property type="evidence" value="ECO:0007669"/>
    <property type="project" value="UniProtKB-KW"/>
</dbReference>
<dbReference type="GO" id="GO:0019013">
    <property type="term" value="C:viral nucleocapsid"/>
    <property type="evidence" value="ECO:0007669"/>
    <property type="project" value="UniProtKB-KW"/>
</dbReference>
<dbReference type="GO" id="GO:0003723">
    <property type="term" value="F:RNA binding"/>
    <property type="evidence" value="ECO:0007669"/>
    <property type="project" value="UniProtKB-KW"/>
</dbReference>
<dbReference type="GO" id="GO:0039660">
    <property type="term" value="F:structural constituent of virion"/>
    <property type="evidence" value="ECO:0007669"/>
    <property type="project" value="UniProtKB-KW"/>
</dbReference>
<dbReference type="GO" id="GO:0008270">
    <property type="term" value="F:zinc ion binding"/>
    <property type="evidence" value="ECO:0007669"/>
    <property type="project" value="UniProtKB-KW"/>
</dbReference>
<dbReference type="GO" id="GO:0039702">
    <property type="term" value="P:viral budding via host ESCRT complex"/>
    <property type="evidence" value="ECO:0007669"/>
    <property type="project" value="UniProtKB-KW"/>
</dbReference>
<dbReference type="FunFam" id="1.10.375.10:FF:000008">
    <property type="entry name" value="Gag polyprotein"/>
    <property type="match status" value="1"/>
</dbReference>
<dbReference type="Gene3D" id="1.10.150.180">
    <property type="entry name" value="Gamma-retroviral matrix domain"/>
    <property type="match status" value="1"/>
</dbReference>
<dbReference type="Gene3D" id="1.10.375.10">
    <property type="entry name" value="Human Immunodeficiency Virus Type 1 Capsid Protein"/>
    <property type="match status" value="1"/>
</dbReference>
<dbReference type="Gene3D" id="4.10.60.10">
    <property type="entry name" value="Zinc finger, CCHC-type"/>
    <property type="match status" value="1"/>
</dbReference>
<dbReference type="InterPro" id="IPR000840">
    <property type="entry name" value="G_retro_matrix"/>
</dbReference>
<dbReference type="InterPro" id="IPR036946">
    <property type="entry name" value="G_retro_matrix_sf"/>
</dbReference>
<dbReference type="InterPro" id="IPR002079">
    <property type="entry name" value="Gag_p12"/>
</dbReference>
<dbReference type="InterPro" id="IPR003036">
    <property type="entry name" value="Gag_P30"/>
</dbReference>
<dbReference type="InterPro" id="IPR008919">
    <property type="entry name" value="Retrov_capsid_N"/>
</dbReference>
<dbReference type="InterPro" id="IPR050462">
    <property type="entry name" value="Retroviral_Gag-Pol_poly"/>
</dbReference>
<dbReference type="InterPro" id="IPR010999">
    <property type="entry name" value="Retrovr_matrix"/>
</dbReference>
<dbReference type="InterPro" id="IPR001878">
    <property type="entry name" value="Znf_CCHC"/>
</dbReference>
<dbReference type="InterPro" id="IPR036875">
    <property type="entry name" value="Znf_CCHC_sf"/>
</dbReference>
<dbReference type="PANTHER" id="PTHR33166">
    <property type="entry name" value="GAG_P30 DOMAIN-CONTAINING PROTEIN"/>
    <property type="match status" value="1"/>
</dbReference>
<dbReference type="Pfam" id="PF01140">
    <property type="entry name" value="Gag_MA"/>
    <property type="match status" value="1"/>
</dbReference>
<dbReference type="Pfam" id="PF01141">
    <property type="entry name" value="Gag_p12"/>
    <property type="match status" value="1"/>
</dbReference>
<dbReference type="Pfam" id="PF02093">
    <property type="entry name" value="Gag_p30"/>
    <property type="match status" value="1"/>
</dbReference>
<dbReference type="Pfam" id="PF00098">
    <property type="entry name" value="zf-CCHC"/>
    <property type="match status" value="1"/>
</dbReference>
<dbReference type="SMART" id="SM00343">
    <property type="entry name" value="ZnF_C2HC"/>
    <property type="match status" value="1"/>
</dbReference>
<dbReference type="SUPFAM" id="SSF47836">
    <property type="entry name" value="Retroviral matrix proteins"/>
    <property type="match status" value="1"/>
</dbReference>
<dbReference type="SUPFAM" id="SSF47943">
    <property type="entry name" value="Retrovirus capsid protein, N-terminal core domain"/>
    <property type="match status" value="1"/>
</dbReference>
<dbReference type="SUPFAM" id="SSF57756">
    <property type="entry name" value="Retrovirus zinc finger-like domains"/>
    <property type="match status" value="1"/>
</dbReference>
<dbReference type="PROSITE" id="PS50158">
    <property type="entry name" value="ZF_CCHC"/>
    <property type="match status" value="1"/>
</dbReference>
<gene>
    <name type="primary">gag</name>
</gene>
<feature type="initiator methionine" description="Removed; by host" evidence="4">
    <location>
        <position position="1"/>
    </location>
</feature>
<feature type="chain" id="PRO_0000390807" description="Gag polyprotein">
    <location>
        <begin position="2"/>
        <end position="537"/>
    </location>
</feature>
<feature type="chain" id="PRO_0000040880" description="Matrix protein p15">
    <location>
        <begin position="2"/>
        <end position="129"/>
    </location>
</feature>
<feature type="chain" id="PRO_0000040881" description="RNA-binding phosphoprotein p12">
    <location>
        <begin position="130"/>
        <end position="214"/>
    </location>
</feature>
<feature type="chain" id="PRO_0000040882" description="Capsid protein p30">
    <location>
        <begin position="215"/>
        <end position="477"/>
    </location>
</feature>
<feature type="chain" id="PRO_0000040883" description="Nucleocapsid protein p10-Gag">
    <location>
        <begin position="478"/>
        <end position="537"/>
    </location>
</feature>
<feature type="zinc finger region" description="CCHC-type" evidence="5">
    <location>
        <begin position="501"/>
        <end position="518"/>
    </location>
</feature>
<feature type="region of interest" description="Disordered" evidence="6">
    <location>
        <begin position="112"/>
        <end position="217"/>
    </location>
</feature>
<feature type="region of interest" description="Interaction with host PIAS4" evidence="1">
    <location>
        <begin position="344"/>
        <end position="392"/>
    </location>
</feature>
<feature type="region of interest" description="Interaction with host UBE2I" evidence="1">
    <location>
        <begin position="429"/>
        <end position="434"/>
    </location>
</feature>
<feature type="region of interest" description="Disordered" evidence="6">
    <location>
        <begin position="433"/>
        <end position="537"/>
    </location>
</feature>
<feature type="coiled-coil region" evidence="4">
    <location>
        <begin position="448"/>
        <end position="470"/>
    </location>
</feature>
<feature type="short sequence motif" description="PTAP/PSAP motif" evidence="1">
    <location>
        <begin position="109"/>
        <end position="112"/>
    </location>
</feature>
<feature type="short sequence motif" description="LYPX(n)L motif" evidence="1">
    <location>
        <begin position="128"/>
        <end position="132"/>
    </location>
</feature>
<feature type="short sequence motif" description="PPXY motif" evidence="1">
    <location>
        <begin position="161"/>
        <end position="164"/>
    </location>
</feature>
<feature type="compositionally biased region" description="Basic and acidic residues" evidence="6">
    <location>
        <begin position="433"/>
        <end position="474"/>
    </location>
</feature>
<feature type="compositionally biased region" description="Basic and acidic residues" evidence="6">
    <location>
        <begin position="485"/>
        <end position="518"/>
    </location>
</feature>
<feature type="site" description="Cleavage; by viral protease" evidence="1">
    <location>
        <begin position="129"/>
        <end position="130"/>
    </location>
</feature>
<feature type="site" description="Cleavage; by viral protease" evidence="1">
    <location>
        <begin position="214"/>
        <end position="215"/>
    </location>
</feature>
<feature type="site" description="Cleavage; by viral protease" evidence="1">
    <location>
        <begin position="477"/>
        <end position="478"/>
    </location>
</feature>
<feature type="modified residue" description="Phosphoserine; by host" evidence="1">
    <location>
        <position position="191"/>
    </location>
</feature>
<feature type="lipid moiety-binding region" description="N-myristoyl glycine; by host" evidence="4">
    <location>
        <position position="2"/>
    </location>
</feature>
<evidence type="ECO:0000250" key="1">
    <source>
        <dbReference type="UniProtKB" id="P03332"/>
    </source>
</evidence>
<evidence type="ECO:0000250" key="2">
    <source>
        <dbReference type="UniProtKB" id="P03336"/>
    </source>
</evidence>
<evidence type="ECO:0000250" key="3">
    <source>
        <dbReference type="UniProtKB" id="P26807"/>
    </source>
</evidence>
<evidence type="ECO:0000255" key="4"/>
<evidence type="ECO:0000255" key="5">
    <source>
        <dbReference type="PROSITE-ProRule" id="PRU00047"/>
    </source>
</evidence>
<evidence type="ECO:0000256" key="6">
    <source>
        <dbReference type="SAM" id="MobiDB-lite"/>
    </source>
</evidence>
<comment type="function">
    <molecule>Gag polyprotein</molecule>
    <text evidence="1">Plays a role in budding and is processed by the viral protease during virion maturation outside the cell. During budding, it recruits, in a PPXY-dependent or independent manner, Nedd4-like ubiquitin ligases that conjugate ubiquitin molecules to Gag, or to Gag binding host factors. Interaction with HECT ubiquitin ligases probably links the viral protein to the host ESCRT pathway and facilitates release.</text>
</comment>
<comment type="function">
    <molecule>Matrix protein p15</molecule>
    <text evidence="1">Targets Gag and gag-pol polyproteins to the plasma membrane via a multipartite membrane binding signal, that includes its myristoylated N-terminus. Also mediates nuclear localization of the pre-integration complex.</text>
</comment>
<comment type="function">
    <molecule>RNA-binding phosphoprotein p12</molecule>
    <text evidence="1">Constituent of the pre-integration complex (PIC) which tethers the latter to mitotic chromosomes.</text>
</comment>
<comment type="function">
    <molecule>Capsid protein p30</molecule>
    <text evidence="2">Forms the spherical core of the virion that encapsulates the genomic RNA-nucleocapsid complex.</text>
</comment>
<comment type="function">
    <molecule>Nucleocapsid protein p10-Gag</molecule>
    <text evidence="1">Involved in the packaging and encapsidation of two copies of the genome. Binds with high affinity to conserved UCUG elements within the packaging signal, located near the 5'-end of the genome. This binding is dependent on genome dimerization.</text>
</comment>
<comment type="subunit">
    <molecule>Capsid protein p30</molecule>
    <text evidence="1 2">Homohexamer; further associates as homomultimer (By similarity). The virus core is composed of a lattice formed from hexagonal rings, each containing six capsid monomers. Interacts with mouse UBE2I and mouse PIAS4.</text>
</comment>
<comment type="subunit">
    <molecule>Gag polyprotein</molecule>
    <text evidence="1">Interacts (via PPXY motif) with host NEDD4. Interacts (via PSAP motif) with host TSG101. Interacts (via LYPX(n)L motif) with host PDCD6IP.</text>
</comment>
<comment type="subcellular location">
    <molecule>Gag polyprotein</molecule>
    <subcellularLocation>
        <location evidence="1">Virion</location>
    </subcellularLocation>
    <subcellularLocation>
        <location evidence="1">Host cell membrane</location>
        <topology evidence="1">Lipid-anchor</topology>
    </subcellularLocation>
    <subcellularLocation>
        <location evidence="3">Host endosome</location>
        <location evidence="3">Host multivesicular body</location>
    </subcellularLocation>
</comment>
<comment type="subcellular location">
    <molecule>Matrix protein p15</molecule>
    <subcellularLocation>
        <location evidence="1">Virion</location>
    </subcellularLocation>
</comment>
<comment type="subcellular location">
    <molecule>Capsid protein p30</molecule>
    <subcellularLocation>
        <location evidence="1">Virion</location>
    </subcellularLocation>
</comment>
<comment type="subcellular location">
    <molecule>Nucleocapsid protein p10-Gag</molecule>
    <subcellularLocation>
        <location evidence="1">Virion</location>
    </subcellularLocation>
</comment>
<comment type="subcellular location">
    <molecule>RNA-binding phosphoprotein p12</molecule>
    <subcellularLocation>
        <location evidence="1">Host cytoplasm</location>
    </subcellularLocation>
    <text evidence="1">Localizes to the host cytoplasm early in infection and binds to the mitotic chromosomes later on.</text>
</comment>
<comment type="domain">
    <molecule>Gag polyprotein</molecule>
    <text evidence="1">Late-budding domains (L domains) are short sequence motifs essential for viral particle budding. They recruit proteins of the host ESCRT machinery (Endosomal Sorting Complex Required for Transport) or ESCRT-associated proteins. RNA-binding phosphoprotein p12 contains one L domain: a PPXY motif which interacts with the WW domain 3 of NEDD4 E3 ubiquitin ligase. PPXY motif is essential for virus egress. Matrix protein p15 contains one L domain: a PTAP/PSAP motif, which interacts with the UEV domain of TSG101. The junction between the matrix protein p15 and RNA-binding phosphoprotein p12 also contains one L domain: a LYPX(n)L motif which interacts with PDCD6IP. Both PSAP and LYPX(n)L domains might play little to no role in budding and possibly drive residual virus release.</text>
</comment>
<comment type="PTM">
    <molecule>Gag polyprotein</molecule>
    <text evidence="1">Ubiquitinated by ITCH. Gag can recruit the ubiquitin ligase Itch in an L domain-independent manner to facilitate virus release via a mechanism that involves Gag ubiquitination.</text>
</comment>
<comment type="PTM">
    <molecule>Gag polyprotein</molecule>
    <text evidence="1">Specific enzymatic cleavages by the viral protease yield mature proteins. The protease is released by autocatalytic cleavage. The polyprotein is cleaved during and after budding, this process is termed maturation.</text>
</comment>
<comment type="PTM">
    <molecule>Capsid protein p30</molecule>
    <text evidence="1">Sumoylated; required for virus replication.</text>
</comment>
<comment type="PTM">
    <text evidence="1">RNA-binding phosphoprotein p12 is phosphorylated on serine residues.</text>
</comment>
<reference key="1">
    <citation type="journal article" date="1991" name="J. Virol.">
        <title>Characteristics and contributions of defective, ecotropic, and mink cell focus-inducing viruses involved in a retrovirus-induced immunodeficiency syndrome of mice.</title>
        <authorList>
            <person name="Chattopadhyay S.K."/>
            <person name="Sengupta D.N."/>
            <person name="Fredrickson T.N."/>
            <person name="Morse H.C. III"/>
            <person name="Hartley J.W."/>
        </authorList>
    </citation>
    <scope>NUCLEOTIDE SEQUENCE [GENOMIC DNA]</scope>
</reference>
<name>GAG_MLVBM</name>
<organismHost>
    <name type="scientific">Mus musculus</name>
    <name type="common">Mouse</name>
    <dbReference type="NCBI Taxonomy" id="10090"/>
</organismHost>
<sequence>MGQTVTTPLSLTLEHWGDVQRIASNQSVGVKKRRWVTFCSAEWPTFGVGWPQDGTFNLDIILQVKSKVFSPGPHGHPDQVPYIVTWEAIAYEPPPWVKPFVSPKLSLSPTAPILPSGPSTQPPPRSALYPAFTPSIKPRPSKPQVLSDDGGPLIDLLTEDPPPYGEQGPSSPDGDGDREEATSTSEIPAPSPMVSRLRGKRDPPAADSTTSRAFPLRLGGNGQLQYWPFSSSDLYNWKNNNPSFSEDPGKLTALIESVLTTHQPTWDDCQQLLGTLLTGEEKQRVLLEARKAVRGNDGRPTQLPNEVNSAFPLERPDWDYTTPEGRNHLVLYRQLLLAGLQNAGRSPTNLAKVKGITQGPNESPSAFLERLKEAYRRYTPYDPEDPGQETNVSMSFIWQSAPAIGRKLERLEDLKSKTLGDLVREAEKIFNKRETPEEREERIRRETEEKEERRRAGDEQREKERDRRRQREMSKLLATVVTGQRQDRQGGERRRPQLDKDQCAYCKEKGHWAKDCPKKPRGPRGPRPQTSLLTLDD</sequence>